<feature type="chain" id="PRO_0000260725" description="6-phospho-beta-galactosidase">
    <location>
        <begin position="1"/>
        <end position="470"/>
    </location>
</feature>
<feature type="active site" description="Proton donor" evidence="1">
    <location>
        <position position="160"/>
    </location>
</feature>
<feature type="active site" description="Nucleophile" evidence="1">
    <location>
        <position position="375"/>
    </location>
</feature>
<feature type="binding site" evidence="1">
    <location>
        <position position="19"/>
    </location>
    <ligand>
        <name>D-galactose 6-phosphate</name>
        <dbReference type="ChEBI" id="CHEBI:91004"/>
    </ligand>
</feature>
<feature type="binding site" evidence="1">
    <location>
        <position position="116"/>
    </location>
    <ligand>
        <name>D-galactose 6-phosphate</name>
        <dbReference type="ChEBI" id="CHEBI:91004"/>
    </ligand>
</feature>
<feature type="binding site" evidence="1">
    <location>
        <position position="159"/>
    </location>
    <ligand>
        <name>D-galactose 6-phosphate</name>
        <dbReference type="ChEBI" id="CHEBI:91004"/>
    </ligand>
</feature>
<feature type="binding site" evidence="1">
    <location>
        <position position="160"/>
    </location>
    <ligand>
        <name>D-galactose 6-phosphate</name>
        <dbReference type="ChEBI" id="CHEBI:91004"/>
    </ligand>
</feature>
<feature type="binding site" evidence="1">
    <location>
        <position position="297"/>
    </location>
    <ligand>
        <name>D-galactose 6-phosphate</name>
        <dbReference type="ChEBI" id="CHEBI:91004"/>
    </ligand>
</feature>
<feature type="binding site" evidence="1">
    <location>
        <position position="430"/>
    </location>
    <ligand>
        <name>D-galactose 6-phosphate</name>
        <dbReference type="ChEBI" id="CHEBI:91004"/>
    </ligand>
</feature>
<feature type="binding site" evidence="1">
    <location>
        <position position="431"/>
    </location>
    <ligand>
        <name>D-galactose 6-phosphate</name>
        <dbReference type="ChEBI" id="CHEBI:91004"/>
    </ligand>
</feature>
<feature type="binding site" evidence="1">
    <location>
        <position position="437"/>
    </location>
    <ligand>
        <name>D-galactose 6-phosphate</name>
        <dbReference type="ChEBI" id="CHEBI:91004"/>
    </ligand>
</feature>
<feature type="binding site" evidence="1">
    <location>
        <position position="439"/>
    </location>
    <ligand>
        <name>D-galactose 6-phosphate</name>
        <dbReference type="ChEBI" id="CHEBI:91004"/>
    </ligand>
</feature>
<keyword id="KW-0326">Glycosidase</keyword>
<keyword id="KW-0378">Hydrolase</keyword>
<keyword id="KW-1185">Reference proteome</keyword>
<accession>Q2G2D5</accession>
<sequence length="470" mass="54550">MTKTLPEDFIFGGATAAYQAEGATNTDGKGRVAWDTYLEENYWYTAEPASDFYNRYPVDLELSEKFGVNGIRISIAWSRIFPNGYGEVNPKGVEYYHKLFAECHKRHVEPFVTLHHFDTPEVLHKDGDFLNRKTIDYFVDYAEYCFKEFPEVKYWTTFNEIGPIGDGQYLVGKFPPGIKYDFEKVFQSHHNMMVAHARAVKLFKDGGYKGEIGVVHALPTKYPFDPSNPEDVRAAELEDIIHNKFILDATYLGKYSRETMEGVQHILSVNGGKLNITDEDYAILDAAKDLNDFLGINYYMSDWMRGYDGESEITHNATGDKGGSKYQLKGVGQREFDVDVPRTDWDWMIYPQGLYDQIMRVVKDYPNYHKIYITENGLGYKDEFIESEKTVHDDARIDYVRQHLNVIADAIIDGANVKGYFIWSLMDVFSWSNGYEKRYGLFYVDFETQERYPKKSAYWYKELAETKEIK</sequence>
<gene>
    <name evidence="1" type="primary">lacG</name>
    <name type="ordered locus">SAOUHSC_02449</name>
</gene>
<organism>
    <name type="scientific">Staphylococcus aureus (strain NCTC 8325 / PS 47)</name>
    <dbReference type="NCBI Taxonomy" id="93061"/>
    <lineage>
        <taxon>Bacteria</taxon>
        <taxon>Bacillati</taxon>
        <taxon>Bacillota</taxon>
        <taxon>Bacilli</taxon>
        <taxon>Bacillales</taxon>
        <taxon>Staphylococcaceae</taxon>
        <taxon>Staphylococcus</taxon>
    </lineage>
</organism>
<dbReference type="EC" id="3.2.1.85" evidence="1"/>
<dbReference type="EMBL" id="CP000253">
    <property type="protein sequence ID" value="ABD31469.1"/>
    <property type="molecule type" value="Genomic_DNA"/>
</dbReference>
<dbReference type="RefSeq" id="WP_000169220.1">
    <property type="nucleotide sequence ID" value="NZ_LS483365.1"/>
</dbReference>
<dbReference type="RefSeq" id="YP_500916.1">
    <property type="nucleotide sequence ID" value="NC_007795.1"/>
</dbReference>
<dbReference type="SMR" id="Q2G2D5"/>
<dbReference type="STRING" id="93061.SAOUHSC_02449"/>
<dbReference type="CAZy" id="GH1">
    <property type="family name" value="Glycoside Hydrolase Family 1"/>
</dbReference>
<dbReference type="PaxDb" id="1280-SAXN108_2442"/>
<dbReference type="GeneID" id="3919012"/>
<dbReference type="KEGG" id="sao:SAOUHSC_02449"/>
<dbReference type="PATRIC" id="fig|93061.5.peg.2208"/>
<dbReference type="eggNOG" id="COG2723">
    <property type="taxonomic scope" value="Bacteria"/>
</dbReference>
<dbReference type="HOGENOM" id="CLU_001859_1_3_9"/>
<dbReference type="OrthoDB" id="9765195at2"/>
<dbReference type="UniPathway" id="UPA00542">
    <property type="reaction ID" value="UER00605"/>
</dbReference>
<dbReference type="PRO" id="PR:Q2G2D5"/>
<dbReference type="Proteomes" id="UP000008816">
    <property type="component" value="Chromosome"/>
</dbReference>
<dbReference type="GO" id="GO:0005829">
    <property type="term" value="C:cytosol"/>
    <property type="evidence" value="ECO:0000318"/>
    <property type="project" value="GO_Central"/>
</dbReference>
<dbReference type="GO" id="GO:0033920">
    <property type="term" value="F:6-phospho-beta-galactosidase activity"/>
    <property type="evidence" value="ECO:0007669"/>
    <property type="project" value="UniProtKB-UniRule"/>
</dbReference>
<dbReference type="GO" id="GO:0008422">
    <property type="term" value="F:beta-glucosidase activity"/>
    <property type="evidence" value="ECO:0000318"/>
    <property type="project" value="GO_Central"/>
</dbReference>
<dbReference type="GO" id="GO:0016052">
    <property type="term" value="P:carbohydrate catabolic process"/>
    <property type="evidence" value="ECO:0000318"/>
    <property type="project" value="GO_Central"/>
</dbReference>
<dbReference type="GO" id="GO:0019512">
    <property type="term" value="P:lactose catabolic process via tagatose-6-phosphate"/>
    <property type="evidence" value="ECO:0007669"/>
    <property type="project" value="InterPro"/>
</dbReference>
<dbReference type="FunFam" id="3.20.20.80:FF:000004">
    <property type="entry name" value="Beta-glucosidase 6-phospho-beta-glucosidase"/>
    <property type="match status" value="1"/>
</dbReference>
<dbReference type="Gene3D" id="3.20.20.80">
    <property type="entry name" value="Glycosidases"/>
    <property type="match status" value="1"/>
</dbReference>
<dbReference type="HAMAP" id="MF_01574">
    <property type="entry name" value="LacG"/>
    <property type="match status" value="1"/>
</dbReference>
<dbReference type="InterPro" id="IPR005928">
    <property type="entry name" value="6P-beta-galactosidase"/>
</dbReference>
<dbReference type="InterPro" id="IPR001360">
    <property type="entry name" value="Glyco_hydro_1"/>
</dbReference>
<dbReference type="InterPro" id="IPR018120">
    <property type="entry name" value="Glyco_hydro_1_AS"/>
</dbReference>
<dbReference type="InterPro" id="IPR033132">
    <property type="entry name" value="Glyco_hydro_1_N_CS"/>
</dbReference>
<dbReference type="InterPro" id="IPR017853">
    <property type="entry name" value="Glycoside_hydrolase_SF"/>
</dbReference>
<dbReference type="NCBIfam" id="TIGR01233">
    <property type="entry name" value="lacG"/>
    <property type="match status" value="1"/>
</dbReference>
<dbReference type="NCBIfam" id="NF010036">
    <property type="entry name" value="PRK13511.1"/>
    <property type="match status" value="1"/>
</dbReference>
<dbReference type="PANTHER" id="PTHR10353">
    <property type="entry name" value="GLYCOSYL HYDROLASE"/>
    <property type="match status" value="1"/>
</dbReference>
<dbReference type="PANTHER" id="PTHR10353:SF36">
    <property type="entry name" value="LP05116P"/>
    <property type="match status" value="1"/>
</dbReference>
<dbReference type="Pfam" id="PF00232">
    <property type="entry name" value="Glyco_hydro_1"/>
    <property type="match status" value="1"/>
</dbReference>
<dbReference type="PRINTS" id="PR00131">
    <property type="entry name" value="GLHYDRLASE1"/>
</dbReference>
<dbReference type="SUPFAM" id="SSF51445">
    <property type="entry name" value="(Trans)glycosidases"/>
    <property type="match status" value="1"/>
</dbReference>
<dbReference type="PROSITE" id="PS00572">
    <property type="entry name" value="GLYCOSYL_HYDROL_F1_1"/>
    <property type="match status" value="1"/>
</dbReference>
<dbReference type="PROSITE" id="PS00653">
    <property type="entry name" value="GLYCOSYL_HYDROL_F1_2"/>
    <property type="match status" value="1"/>
</dbReference>
<name>LACG_STAA8</name>
<reference key="1">
    <citation type="book" date="2006" name="Gram positive pathogens, 2nd edition">
        <title>The Staphylococcus aureus NCTC 8325 genome.</title>
        <editorList>
            <person name="Fischetti V."/>
            <person name="Novick R."/>
            <person name="Ferretti J."/>
            <person name="Portnoy D."/>
            <person name="Rood J."/>
        </editorList>
        <authorList>
            <person name="Gillaspy A.F."/>
            <person name="Worrell V."/>
            <person name="Orvis J."/>
            <person name="Roe B.A."/>
            <person name="Dyer D.W."/>
            <person name="Iandolo J.J."/>
        </authorList>
    </citation>
    <scope>NUCLEOTIDE SEQUENCE [LARGE SCALE GENOMIC DNA]</scope>
    <source>
        <strain>NCTC 8325 / PS 47</strain>
    </source>
</reference>
<evidence type="ECO:0000255" key="1">
    <source>
        <dbReference type="HAMAP-Rule" id="MF_01574"/>
    </source>
</evidence>
<proteinExistence type="inferred from homology"/>
<comment type="catalytic activity">
    <reaction evidence="1">
        <text>a 6-phospho-beta-D-galactoside + H2O = D-galactose 6-phosphate + an alcohol</text>
        <dbReference type="Rhea" id="RHEA:24568"/>
        <dbReference type="ChEBI" id="CHEBI:15377"/>
        <dbReference type="ChEBI" id="CHEBI:30879"/>
        <dbReference type="ChEBI" id="CHEBI:58534"/>
        <dbReference type="ChEBI" id="CHEBI:91004"/>
        <dbReference type="EC" id="3.2.1.85"/>
    </reaction>
</comment>
<comment type="pathway">
    <text evidence="1">Carbohydrate metabolism; lactose degradation; D-galactose 6-phosphate and beta-D-glucose from lactose 6-phosphate: step 1/1.</text>
</comment>
<comment type="similarity">
    <text evidence="1">Belongs to the glycosyl hydrolase 1 family.</text>
</comment>
<protein>
    <recommendedName>
        <fullName evidence="1">6-phospho-beta-galactosidase</fullName>
        <ecNumber evidence="1">3.2.1.85</ecNumber>
    </recommendedName>
    <alternativeName>
        <fullName evidence="1">Beta-D-phosphogalactoside galactohydrolase</fullName>
        <shortName evidence="1">PGALase</shortName>
    </alternativeName>
    <alternativeName>
        <fullName evidence="1">P-beta-Gal</fullName>
        <shortName evidence="1">PBG</shortName>
    </alternativeName>
</protein>